<comment type="function">
    <text evidence="1">Binds to DNA non-specifically. Could be a regulatory factor involved in maltose metabolism.</text>
</comment>
<comment type="similarity">
    <text evidence="1">Belongs to the SfsA family.</text>
</comment>
<feature type="chain" id="PRO_1000093572" description="Sugar fermentation stimulation protein A">
    <location>
        <begin position="1"/>
        <end position="234"/>
    </location>
</feature>
<feature type="DNA-binding region" description="H-T-H motif" evidence="1">
    <location>
        <begin position="201"/>
        <end position="220"/>
    </location>
</feature>
<name>SFSA_ECOSE</name>
<sequence>MEFSPPLQRATLIQRYKRFLADVITPDGRELTLHCPNTGAMTGCATPGDTVWYSTSDNTKRKYPHTWELTQSQSGAFICVNTLWANRLTKEAILNESISELSGYSSLKSEVKYGAERSRIDFMLQADSRPDCYIEVKSVTLAENEQGYFPDAVTERGQKHLRELMSVAAEGQRAVIFFAVLHSAITRFSPARHIDEKYAQLLSEAQQRGVEILAYKAEISAEGMALKKSLPVTL</sequence>
<evidence type="ECO:0000255" key="1">
    <source>
        <dbReference type="HAMAP-Rule" id="MF_00095"/>
    </source>
</evidence>
<organism>
    <name type="scientific">Escherichia coli (strain SE11)</name>
    <dbReference type="NCBI Taxonomy" id="409438"/>
    <lineage>
        <taxon>Bacteria</taxon>
        <taxon>Pseudomonadati</taxon>
        <taxon>Pseudomonadota</taxon>
        <taxon>Gammaproteobacteria</taxon>
        <taxon>Enterobacterales</taxon>
        <taxon>Enterobacteriaceae</taxon>
        <taxon>Escherichia</taxon>
    </lineage>
</organism>
<protein>
    <recommendedName>
        <fullName evidence="1">Sugar fermentation stimulation protein A</fullName>
    </recommendedName>
</protein>
<gene>
    <name evidence="1" type="primary">sfsA</name>
    <name type="ordered locus">ECSE_0146</name>
</gene>
<proteinExistence type="inferred from homology"/>
<reference key="1">
    <citation type="journal article" date="2008" name="DNA Res.">
        <title>Complete genome sequence and comparative analysis of the wild-type commensal Escherichia coli strain SE11 isolated from a healthy adult.</title>
        <authorList>
            <person name="Oshima K."/>
            <person name="Toh H."/>
            <person name="Ogura Y."/>
            <person name="Sasamoto H."/>
            <person name="Morita H."/>
            <person name="Park S.-H."/>
            <person name="Ooka T."/>
            <person name="Iyoda S."/>
            <person name="Taylor T.D."/>
            <person name="Hayashi T."/>
            <person name="Itoh K."/>
            <person name="Hattori M."/>
        </authorList>
    </citation>
    <scope>NUCLEOTIDE SEQUENCE [LARGE SCALE GENOMIC DNA]</scope>
    <source>
        <strain>SE11</strain>
    </source>
</reference>
<dbReference type="EMBL" id="AP009240">
    <property type="protein sequence ID" value="BAG75670.1"/>
    <property type="molecule type" value="Genomic_DNA"/>
</dbReference>
<dbReference type="RefSeq" id="WP_000396036.1">
    <property type="nucleotide sequence ID" value="NC_011415.1"/>
</dbReference>
<dbReference type="SMR" id="B6HZC1"/>
<dbReference type="GeneID" id="75202039"/>
<dbReference type="KEGG" id="ecy:ECSE_0146"/>
<dbReference type="HOGENOM" id="CLU_052299_2_0_6"/>
<dbReference type="Proteomes" id="UP000008199">
    <property type="component" value="Chromosome"/>
</dbReference>
<dbReference type="GO" id="GO:0003677">
    <property type="term" value="F:DNA binding"/>
    <property type="evidence" value="ECO:0007669"/>
    <property type="project" value="UniProtKB-KW"/>
</dbReference>
<dbReference type="CDD" id="cd22359">
    <property type="entry name" value="SfsA-like_bacterial"/>
    <property type="match status" value="1"/>
</dbReference>
<dbReference type="FunFam" id="2.40.50.580:FF:000001">
    <property type="entry name" value="Sugar fermentation stimulation protein A"/>
    <property type="match status" value="1"/>
</dbReference>
<dbReference type="FunFam" id="3.40.1350.60:FF:000001">
    <property type="entry name" value="Sugar fermentation stimulation protein A"/>
    <property type="match status" value="1"/>
</dbReference>
<dbReference type="Gene3D" id="2.40.50.580">
    <property type="match status" value="1"/>
</dbReference>
<dbReference type="Gene3D" id="3.40.1350.60">
    <property type="match status" value="1"/>
</dbReference>
<dbReference type="HAMAP" id="MF_00095">
    <property type="entry name" value="SfsA"/>
    <property type="match status" value="1"/>
</dbReference>
<dbReference type="InterPro" id="IPR005224">
    <property type="entry name" value="SfsA"/>
</dbReference>
<dbReference type="InterPro" id="IPR040452">
    <property type="entry name" value="SfsA_C"/>
</dbReference>
<dbReference type="InterPro" id="IPR041465">
    <property type="entry name" value="SfsA_N"/>
</dbReference>
<dbReference type="NCBIfam" id="TIGR00230">
    <property type="entry name" value="sfsA"/>
    <property type="match status" value="1"/>
</dbReference>
<dbReference type="PANTHER" id="PTHR30545">
    <property type="entry name" value="SUGAR FERMENTATION STIMULATION PROTEIN A"/>
    <property type="match status" value="1"/>
</dbReference>
<dbReference type="PANTHER" id="PTHR30545:SF2">
    <property type="entry name" value="SUGAR FERMENTATION STIMULATION PROTEIN A"/>
    <property type="match status" value="1"/>
</dbReference>
<dbReference type="Pfam" id="PF03749">
    <property type="entry name" value="SfsA"/>
    <property type="match status" value="1"/>
</dbReference>
<dbReference type="Pfam" id="PF17746">
    <property type="entry name" value="SfsA_N"/>
    <property type="match status" value="1"/>
</dbReference>
<keyword id="KW-0238">DNA-binding</keyword>
<accession>B6HZC1</accession>